<protein>
    <recommendedName>
        <fullName evidence="1">Gamma-aminobutyraldehyde dehydrogenase</fullName>
        <shortName evidence="1">ABALDH</shortName>
        <ecNumber evidence="1">1.2.1.19</ecNumber>
    </recommendedName>
    <alternativeName>
        <fullName evidence="1">1-pyrroline dehydrogenase</fullName>
    </alternativeName>
    <alternativeName>
        <fullName evidence="1">4-aminobutanal dehydrogenase</fullName>
    </alternativeName>
    <alternativeName>
        <fullName evidence="1">5-aminopentanal dehydrogenase</fullName>
        <ecNumber evidence="1">1.2.1.-</ecNumber>
    </alternativeName>
</protein>
<proteinExistence type="inferred from homology"/>
<name>ABDH_ECOUT</name>
<comment type="function">
    <text evidence="1">Catalyzes the oxidation 4-aminobutanal (gamma-aminobutyraldehyde) to 4-aminobutanoate (gamma-aminobutyrate or GABA). This is the second step in one of two pathways for putrescine degradation, where putrescine is converted into 4-aminobutanoate via 4-aminobutanal. Also functions as a 5-aminopentanal dehydrogenase in a a L-lysine degradation pathway to succinate that proceeds via cadaverine, glutarate and L-2-hydroxyglutarate.</text>
</comment>
<comment type="catalytic activity">
    <reaction evidence="1">
        <text>4-aminobutanal + NAD(+) + H2O = 4-aminobutanoate + NADH + 2 H(+)</text>
        <dbReference type="Rhea" id="RHEA:19105"/>
        <dbReference type="ChEBI" id="CHEBI:15377"/>
        <dbReference type="ChEBI" id="CHEBI:15378"/>
        <dbReference type="ChEBI" id="CHEBI:57540"/>
        <dbReference type="ChEBI" id="CHEBI:57945"/>
        <dbReference type="ChEBI" id="CHEBI:58264"/>
        <dbReference type="ChEBI" id="CHEBI:59888"/>
        <dbReference type="EC" id="1.2.1.19"/>
    </reaction>
    <physiologicalReaction direction="left-to-right" evidence="1">
        <dbReference type="Rhea" id="RHEA:19106"/>
    </physiologicalReaction>
</comment>
<comment type="catalytic activity">
    <reaction evidence="1">
        <text>5-aminopentanal + NAD(+) + H2O = 5-aminopentanoate + NADH + 2 H(+)</text>
        <dbReference type="Rhea" id="RHEA:61632"/>
        <dbReference type="ChEBI" id="CHEBI:15377"/>
        <dbReference type="ChEBI" id="CHEBI:15378"/>
        <dbReference type="ChEBI" id="CHEBI:57540"/>
        <dbReference type="ChEBI" id="CHEBI:57945"/>
        <dbReference type="ChEBI" id="CHEBI:144896"/>
        <dbReference type="ChEBI" id="CHEBI:356010"/>
    </reaction>
    <physiologicalReaction direction="left-to-right" evidence="1">
        <dbReference type="Rhea" id="RHEA:61633"/>
    </physiologicalReaction>
</comment>
<comment type="pathway">
    <text evidence="1">Amine and polyamine degradation; putrescine degradation; 4-aminobutanoate from 4-aminobutanal: step 1/1.</text>
</comment>
<comment type="pathway">
    <text evidence="1">Amino-acid degradation.</text>
</comment>
<comment type="subunit">
    <text evidence="1">Homotetramer.</text>
</comment>
<comment type="miscellaneous">
    <text evidence="1">4-aminobutanal can spontaneously cyclize to 1-pyrroline, and 5-aminopentanal to 1-piperideine.</text>
</comment>
<comment type="similarity">
    <text evidence="1">Belongs to the aldehyde dehydrogenase family. Gamma-aminobutyraldehyde dehydrogenase subfamily.</text>
</comment>
<reference key="1">
    <citation type="journal article" date="2006" name="Proc. Natl. Acad. Sci. U.S.A.">
        <title>Identification of genes subject to positive selection in uropathogenic strains of Escherichia coli: a comparative genomics approach.</title>
        <authorList>
            <person name="Chen S.L."/>
            <person name="Hung C.-S."/>
            <person name="Xu J."/>
            <person name="Reigstad C.S."/>
            <person name="Magrini V."/>
            <person name="Sabo A."/>
            <person name="Blasiar D."/>
            <person name="Bieri T."/>
            <person name="Meyer R.R."/>
            <person name="Ozersky P."/>
            <person name="Armstrong J.R."/>
            <person name="Fulton R.S."/>
            <person name="Latreille J.P."/>
            <person name="Spieth J."/>
            <person name="Hooton T.M."/>
            <person name="Mardis E.R."/>
            <person name="Hultgren S.J."/>
            <person name="Gordon J.I."/>
        </authorList>
    </citation>
    <scope>NUCLEOTIDE SEQUENCE [LARGE SCALE GENOMIC DNA]</scope>
    <source>
        <strain>UTI89 / UPEC</strain>
    </source>
</reference>
<accession>Q1RBX3</accession>
<gene>
    <name evidence="1" type="primary">patD</name>
    <name type="ordered locus">UTI89_C1663</name>
</gene>
<evidence type="ECO:0000255" key="1">
    <source>
        <dbReference type="HAMAP-Rule" id="MF_01275"/>
    </source>
</evidence>
<keyword id="KW-0520">NAD</keyword>
<keyword id="KW-0560">Oxidoreductase</keyword>
<dbReference type="EC" id="1.2.1.19" evidence="1"/>
<dbReference type="EC" id="1.2.1.-" evidence="1"/>
<dbReference type="EMBL" id="CP000243">
    <property type="protein sequence ID" value="ABE07141.1"/>
    <property type="molecule type" value="Genomic_DNA"/>
</dbReference>
<dbReference type="RefSeq" id="WP_001163909.1">
    <property type="nucleotide sequence ID" value="NZ_CP064825.1"/>
</dbReference>
<dbReference type="SMR" id="Q1RBX3"/>
<dbReference type="KEGG" id="eci:UTI89_C1663"/>
<dbReference type="HOGENOM" id="CLU_005391_1_0_6"/>
<dbReference type="UniPathway" id="UPA00188">
    <property type="reaction ID" value="UER00292"/>
</dbReference>
<dbReference type="Proteomes" id="UP000001952">
    <property type="component" value="Chromosome"/>
</dbReference>
<dbReference type="GO" id="GO:0019145">
    <property type="term" value="F:aminobutyraldehyde dehydrogenase (NAD+) activity"/>
    <property type="evidence" value="ECO:0007669"/>
    <property type="project" value="UniProtKB-UniRule"/>
</dbReference>
<dbReference type="GO" id="GO:0051287">
    <property type="term" value="F:NAD binding"/>
    <property type="evidence" value="ECO:0007669"/>
    <property type="project" value="UniProtKB-UniRule"/>
</dbReference>
<dbReference type="GO" id="GO:0019477">
    <property type="term" value="P:L-lysine catabolic process"/>
    <property type="evidence" value="ECO:0007669"/>
    <property type="project" value="UniProtKB-UniRule"/>
</dbReference>
<dbReference type="GO" id="GO:0009447">
    <property type="term" value="P:putrescine catabolic process"/>
    <property type="evidence" value="ECO:0007669"/>
    <property type="project" value="UniProtKB-UniRule"/>
</dbReference>
<dbReference type="CDD" id="cd07092">
    <property type="entry name" value="ALDH_ABALDH-YdcW"/>
    <property type="match status" value="1"/>
</dbReference>
<dbReference type="FunFam" id="3.40.605.10:FF:000001">
    <property type="entry name" value="Aldehyde dehydrogenase 1"/>
    <property type="match status" value="1"/>
</dbReference>
<dbReference type="FunFam" id="3.40.309.10:FF:000010">
    <property type="entry name" value="Gamma-aminobutyraldehyde dehydrogenase"/>
    <property type="match status" value="1"/>
</dbReference>
<dbReference type="Gene3D" id="3.40.605.10">
    <property type="entry name" value="Aldehyde Dehydrogenase, Chain A, domain 1"/>
    <property type="match status" value="1"/>
</dbReference>
<dbReference type="Gene3D" id="3.40.309.10">
    <property type="entry name" value="Aldehyde Dehydrogenase, Chain A, domain 2"/>
    <property type="match status" value="1"/>
</dbReference>
<dbReference type="HAMAP" id="MF_01275">
    <property type="entry name" value="Aldedh_Prr"/>
    <property type="match status" value="1"/>
</dbReference>
<dbReference type="InterPro" id="IPR016161">
    <property type="entry name" value="Ald_DH/histidinol_DH"/>
</dbReference>
<dbReference type="InterPro" id="IPR016163">
    <property type="entry name" value="Ald_DH_C"/>
</dbReference>
<dbReference type="InterPro" id="IPR029510">
    <property type="entry name" value="Ald_DH_CS_GLU"/>
</dbReference>
<dbReference type="InterPro" id="IPR016162">
    <property type="entry name" value="Ald_DH_N"/>
</dbReference>
<dbReference type="InterPro" id="IPR015590">
    <property type="entry name" value="Aldehyde_DH_dom"/>
</dbReference>
<dbReference type="InterPro" id="IPR015657">
    <property type="entry name" value="Aminobutyraldehyde_DH"/>
</dbReference>
<dbReference type="InterPro" id="IPR017749">
    <property type="entry name" value="PatD"/>
</dbReference>
<dbReference type="NCBIfam" id="TIGR03374">
    <property type="entry name" value="ABALDH"/>
    <property type="match status" value="1"/>
</dbReference>
<dbReference type="NCBIfam" id="NF010000">
    <property type="entry name" value="PRK13473.1"/>
    <property type="match status" value="1"/>
</dbReference>
<dbReference type="PANTHER" id="PTHR11699">
    <property type="entry name" value="ALDEHYDE DEHYDROGENASE-RELATED"/>
    <property type="match status" value="1"/>
</dbReference>
<dbReference type="Pfam" id="PF00171">
    <property type="entry name" value="Aldedh"/>
    <property type="match status" value="1"/>
</dbReference>
<dbReference type="SUPFAM" id="SSF53720">
    <property type="entry name" value="ALDH-like"/>
    <property type="match status" value="1"/>
</dbReference>
<dbReference type="PROSITE" id="PS00687">
    <property type="entry name" value="ALDEHYDE_DEHYDR_GLU"/>
    <property type="match status" value="1"/>
</dbReference>
<organism>
    <name type="scientific">Escherichia coli (strain UTI89 / UPEC)</name>
    <dbReference type="NCBI Taxonomy" id="364106"/>
    <lineage>
        <taxon>Bacteria</taxon>
        <taxon>Pseudomonadati</taxon>
        <taxon>Pseudomonadota</taxon>
        <taxon>Gammaproteobacteria</taxon>
        <taxon>Enterobacterales</taxon>
        <taxon>Enterobacteriaceae</taxon>
        <taxon>Escherichia</taxon>
    </lineage>
</organism>
<sequence length="474" mass="50859">MQHKLLINGELVSGEGEKQPVYNPATGDVLLEIAEASAEQVNAAVRAADAAFAEWGQTTPKARAECLLKLADVIEENGQVFAELESRNCGKPLHSAFNDEIPAIVDVFRFFAGAARCLNGLAAGEYLEGHTSMIRRDPLGVVASIAPWNYPLMMAAWKLAPALAAGNCVVLKPSEITPLTALKLAELAKDIFPAGVINVLFGRGKTVGDPLTGHPKVRMVSLTGSIATGEHIISHTAPSIKRTHMELGGKAPVIVFDDADIEAVVEGVRTFGYYNAGQDCTAACRIYAQKGIYDTLVEKLGAAVATLKSGSPDDESTELGPLSSLAHLERVSKAVEEAKATGHIKVITGGEKRKGNGYYYAPTLLAGALQDDAIVQKEVFGPVVSVTLFDNEEQVVNWANDSQYGLASSVWTKDVGRAHRVSARLQYGCTWVNTHFMLVSEMPHGGQKLSGYGKDMSLYGLEDYTVVRHVMVKH</sequence>
<feature type="chain" id="PRO_0000269695" description="Gamma-aminobutyraldehyde dehydrogenase">
    <location>
        <begin position="1"/>
        <end position="474"/>
    </location>
</feature>
<feature type="active site" evidence="1">
    <location>
        <position position="246"/>
    </location>
</feature>
<feature type="active site" description="Nucleophile" evidence="1">
    <location>
        <position position="280"/>
    </location>
</feature>
<feature type="binding site" evidence="1">
    <location>
        <begin position="146"/>
        <end position="148"/>
    </location>
    <ligand>
        <name>NAD(+)</name>
        <dbReference type="ChEBI" id="CHEBI:57540"/>
    </ligand>
</feature>
<feature type="binding site" evidence="1">
    <location>
        <begin position="172"/>
        <end position="175"/>
    </location>
    <ligand>
        <name>NAD(+)</name>
        <dbReference type="ChEBI" id="CHEBI:57540"/>
    </ligand>
</feature>
<feature type="binding site" evidence="1">
    <location>
        <position position="209"/>
    </location>
    <ligand>
        <name>NAD(+)</name>
        <dbReference type="ChEBI" id="CHEBI:57540"/>
    </ligand>
</feature>
<feature type="binding site" evidence="1">
    <location>
        <begin position="225"/>
        <end position="228"/>
    </location>
    <ligand>
        <name>NAD(+)</name>
        <dbReference type="ChEBI" id="CHEBI:57540"/>
    </ligand>
</feature>
<feature type="binding site" evidence="1">
    <location>
        <position position="280"/>
    </location>
    <ligand>
        <name>NAD(+)</name>
        <dbReference type="ChEBI" id="CHEBI:57540"/>
    </ligand>
</feature>